<organism>
    <name type="scientific">Colobus guereza</name>
    <name type="common">Mantled guereza</name>
    <name type="synonym">Eastern black-and-white colobus monkey</name>
    <dbReference type="NCBI Taxonomy" id="33548"/>
    <lineage>
        <taxon>Eukaryota</taxon>
        <taxon>Metazoa</taxon>
        <taxon>Chordata</taxon>
        <taxon>Craniata</taxon>
        <taxon>Vertebrata</taxon>
        <taxon>Euteleostomi</taxon>
        <taxon>Mammalia</taxon>
        <taxon>Eutheria</taxon>
        <taxon>Euarchontoglires</taxon>
        <taxon>Primates</taxon>
        <taxon>Haplorrhini</taxon>
        <taxon>Catarrhini</taxon>
        <taxon>Cercopithecidae</taxon>
        <taxon>Colobinae</taxon>
        <taxon>Colobus</taxon>
    </lineage>
</organism>
<proteinExistence type="inferred from homology"/>
<dbReference type="EMBL" id="DP000038">
    <property type="protein sequence ID" value="ABO52933.1"/>
    <property type="molecule type" value="Genomic_DNA"/>
</dbReference>
<dbReference type="SMR" id="A4K2P8"/>
<dbReference type="MEROPS" id="I17.003"/>
<dbReference type="GO" id="GO:0005576">
    <property type="term" value="C:extracellular region"/>
    <property type="evidence" value="ECO:0007669"/>
    <property type="project" value="UniProtKB-SubCell"/>
</dbReference>
<dbReference type="GO" id="GO:0004867">
    <property type="term" value="F:serine-type endopeptidase inhibitor activity"/>
    <property type="evidence" value="ECO:0007669"/>
    <property type="project" value="UniProtKB-KW"/>
</dbReference>
<dbReference type="GO" id="GO:0042742">
    <property type="term" value="P:defense response to bacterium"/>
    <property type="evidence" value="ECO:0007669"/>
    <property type="project" value="UniProtKB-KW"/>
</dbReference>
<dbReference type="FunFam" id="4.10.75.10:FF:000005">
    <property type="entry name" value="WAP four-disulfide core domain protein 12"/>
    <property type="match status" value="1"/>
</dbReference>
<dbReference type="Gene3D" id="4.10.75.10">
    <property type="entry name" value="Elafin-like"/>
    <property type="match status" value="1"/>
</dbReference>
<dbReference type="InterPro" id="IPR036645">
    <property type="entry name" value="Elafin-like_sf"/>
</dbReference>
<dbReference type="InterPro" id="IPR008197">
    <property type="entry name" value="WAP_dom"/>
</dbReference>
<dbReference type="Pfam" id="PF00095">
    <property type="entry name" value="WAP"/>
    <property type="match status" value="1"/>
</dbReference>
<dbReference type="PRINTS" id="PR00003">
    <property type="entry name" value="4DISULPHCORE"/>
</dbReference>
<dbReference type="SMART" id="SM00217">
    <property type="entry name" value="WAP"/>
    <property type="match status" value="1"/>
</dbReference>
<dbReference type="SUPFAM" id="SSF57256">
    <property type="entry name" value="Elafin-like"/>
    <property type="match status" value="1"/>
</dbReference>
<dbReference type="PROSITE" id="PS51390">
    <property type="entry name" value="WAP"/>
    <property type="match status" value="1"/>
</dbReference>
<protein>
    <recommendedName>
        <fullName>WAP four-disulfide core domain protein 12</fullName>
    </recommendedName>
</protein>
<reference key="1">
    <citation type="journal article" date="2007" name="Genome Res.">
        <title>Comparative sequence analyses reveal rapid and divergent evolutionary changes of the WFDC locus in the primate lineage.</title>
        <authorList>
            <consortium name="NISC comparative sequencing program"/>
            <person name="Hurle B."/>
            <person name="Swanson W."/>
            <person name="Green E.D."/>
        </authorList>
    </citation>
    <scope>NUCLEOTIDE SEQUENCE [GENOMIC DNA]</scope>
</reference>
<feature type="signal peptide" evidence="2">
    <location>
        <begin position="1"/>
        <end position="23"/>
    </location>
</feature>
<feature type="chain" id="PRO_0000289648" description="WAP four-disulfide core domain protein 12">
    <location>
        <begin position="24"/>
        <end position="111"/>
    </location>
</feature>
<feature type="domain" description="WAP" evidence="3">
    <location>
        <begin position="27"/>
        <end position="74"/>
    </location>
</feature>
<feature type="region of interest" description="Disordered" evidence="4">
    <location>
        <begin position="80"/>
        <end position="111"/>
    </location>
</feature>
<feature type="compositionally biased region" description="Polar residues" evidence="4">
    <location>
        <begin position="101"/>
        <end position="111"/>
    </location>
</feature>
<feature type="disulfide bond" evidence="3">
    <location>
        <begin position="34"/>
        <end position="62"/>
    </location>
</feature>
<feature type="disulfide bond" evidence="3">
    <location>
        <begin position="41"/>
        <end position="66"/>
    </location>
</feature>
<feature type="disulfide bond" evidence="3">
    <location>
        <begin position="49"/>
        <end position="61"/>
    </location>
</feature>
<feature type="disulfide bond" evidence="3">
    <location>
        <begin position="55"/>
        <end position="70"/>
    </location>
</feature>
<keyword id="KW-0044">Antibiotic</keyword>
<keyword id="KW-0929">Antimicrobial</keyword>
<keyword id="KW-1015">Disulfide bond</keyword>
<keyword id="KW-0646">Protease inhibitor</keyword>
<keyword id="KW-0964">Secreted</keyword>
<keyword id="KW-0722">Serine protease inhibitor</keyword>
<keyword id="KW-0732">Signal</keyword>
<gene>
    <name type="primary">WFDC12</name>
</gene>
<comment type="function">
    <text evidence="1">Antibacterial protein. Putative acid-stable proteinase inhibitor (By similarity).</text>
</comment>
<comment type="subcellular location">
    <subcellularLocation>
        <location evidence="5">Secreted</location>
    </subcellularLocation>
</comment>
<accession>A4K2P8</accession>
<name>WFD12_COLGU</name>
<sequence>MGSSSFLVLMVSLALVTLVVVEGVKGGIEKAGVCPADNVRCFKSNPPQCHTDQDCLGERKCCYLHCGFKCVIPVKKLEEGGNKDEDVSGPHPEPGWEAKSPGSSSTGCPQI</sequence>
<evidence type="ECO:0000250" key="1"/>
<evidence type="ECO:0000255" key="2"/>
<evidence type="ECO:0000255" key="3">
    <source>
        <dbReference type="PROSITE-ProRule" id="PRU00722"/>
    </source>
</evidence>
<evidence type="ECO:0000256" key="4">
    <source>
        <dbReference type="SAM" id="MobiDB-lite"/>
    </source>
</evidence>
<evidence type="ECO:0000305" key="5"/>